<protein>
    <recommendedName>
        <fullName evidence="1">Chorismate synthase</fullName>
        <shortName evidence="1">CS</shortName>
        <ecNumber evidence="1">4.2.3.5</ecNumber>
    </recommendedName>
    <alternativeName>
        <fullName evidence="1">5-enolpyruvylshikimate-3-phosphate phospholyase</fullName>
    </alternativeName>
</protein>
<proteinExistence type="inferred from homology"/>
<sequence>MAGNSFGTLFRFTTFGESHGPAIGCIVDGVPPRLPLDEAFIQGFLDRRRPGQSRFVTQRQEPDAVRILSGVFEGLTTGTPVMLEIVNQDQRSRDYGEIRDRFRPGHADWTYQAKYGIRDHRGGGRSSARETASRVAAGAVARRVLETAPAPVTVRGALVQVGPHRVDRARWDWAEVERNPFFCPDAGTAALWADYLDGVRKAGSSIGAVVEVVASGVPAGWGEPIYDKLDGDLARAMMTINAVKGVEIGAGFAAAELSGEENADEMRAGPDGQPLFLSNRAGGILGGISTGQDIVVRFAVKPTSSILTPRRTIDTAGHETEIVTKGRHDPCVGIRAVPVGEAMMACVLADHFLRHRALVGAPGPVGNGGPVEDGDPVGG</sequence>
<organism>
    <name type="scientific">Rhodospirillum centenum (strain ATCC 51521 / SW)</name>
    <dbReference type="NCBI Taxonomy" id="414684"/>
    <lineage>
        <taxon>Bacteria</taxon>
        <taxon>Pseudomonadati</taxon>
        <taxon>Pseudomonadota</taxon>
        <taxon>Alphaproteobacteria</taxon>
        <taxon>Rhodospirillales</taxon>
        <taxon>Rhodospirillaceae</taxon>
        <taxon>Rhodospirillum</taxon>
    </lineage>
</organism>
<name>AROC_RHOCS</name>
<reference key="1">
    <citation type="submission" date="2007-03" db="EMBL/GenBank/DDBJ databases">
        <title>Genome sequence of Rhodospirillum centenum.</title>
        <authorList>
            <person name="Touchman J.W."/>
            <person name="Bauer C."/>
            <person name="Blankenship R.E."/>
        </authorList>
    </citation>
    <scope>NUCLEOTIDE SEQUENCE [LARGE SCALE GENOMIC DNA]</scope>
    <source>
        <strain>ATCC 51521 / SW</strain>
    </source>
</reference>
<dbReference type="EC" id="4.2.3.5" evidence="1"/>
<dbReference type="EMBL" id="CP000613">
    <property type="protein sequence ID" value="ACI98012.1"/>
    <property type="molecule type" value="Genomic_DNA"/>
</dbReference>
<dbReference type="RefSeq" id="WP_012565804.1">
    <property type="nucleotide sequence ID" value="NC_011420.2"/>
</dbReference>
<dbReference type="SMR" id="B6IRC6"/>
<dbReference type="STRING" id="414684.RC1_0576"/>
<dbReference type="KEGG" id="rce:RC1_0576"/>
<dbReference type="eggNOG" id="COG0082">
    <property type="taxonomic scope" value="Bacteria"/>
</dbReference>
<dbReference type="HOGENOM" id="CLU_034547_0_0_5"/>
<dbReference type="OrthoDB" id="9771806at2"/>
<dbReference type="UniPathway" id="UPA00053">
    <property type="reaction ID" value="UER00090"/>
</dbReference>
<dbReference type="Proteomes" id="UP000001591">
    <property type="component" value="Chromosome"/>
</dbReference>
<dbReference type="GO" id="GO:0005829">
    <property type="term" value="C:cytosol"/>
    <property type="evidence" value="ECO:0007669"/>
    <property type="project" value="TreeGrafter"/>
</dbReference>
<dbReference type="GO" id="GO:0004107">
    <property type="term" value="F:chorismate synthase activity"/>
    <property type="evidence" value="ECO:0007669"/>
    <property type="project" value="UniProtKB-UniRule"/>
</dbReference>
<dbReference type="GO" id="GO:0010181">
    <property type="term" value="F:FMN binding"/>
    <property type="evidence" value="ECO:0007669"/>
    <property type="project" value="TreeGrafter"/>
</dbReference>
<dbReference type="GO" id="GO:0008652">
    <property type="term" value="P:amino acid biosynthetic process"/>
    <property type="evidence" value="ECO:0007669"/>
    <property type="project" value="UniProtKB-KW"/>
</dbReference>
<dbReference type="GO" id="GO:0009073">
    <property type="term" value="P:aromatic amino acid family biosynthetic process"/>
    <property type="evidence" value="ECO:0007669"/>
    <property type="project" value="UniProtKB-KW"/>
</dbReference>
<dbReference type="GO" id="GO:0009423">
    <property type="term" value="P:chorismate biosynthetic process"/>
    <property type="evidence" value="ECO:0007669"/>
    <property type="project" value="UniProtKB-UniRule"/>
</dbReference>
<dbReference type="CDD" id="cd07304">
    <property type="entry name" value="Chorismate_synthase"/>
    <property type="match status" value="1"/>
</dbReference>
<dbReference type="Gene3D" id="3.60.150.10">
    <property type="entry name" value="Chorismate synthase AroC"/>
    <property type="match status" value="1"/>
</dbReference>
<dbReference type="HAMAP" id="MF_00300">
    <property type="entry name" value="Chorismate_synth"/>
    <property type="match status" value="1"/>
</dbReference>
<dbReference type="InterPro" id="IPR000453">
    <property type="entry name" value="Chorismate_synth"/>
</dbReference>
<dbReference type="InterPro" id="IPR035904">
    <property type="entry name" value="Chorismate_synth_AroC_sf"/>
</dbReference>
<dbReference type="InterPro" id="IPR020541">
    <property type="entry name" value="Chorismate_synthase_CS"/>
</dbReference>
<dbReference type="NCBIfam" id="TIGR00033">
    <property type="entry name" value="aroC"/>
    <property type="match status" value="1"/>
</dbReference>
<dbReference type="NCBIfam" id="NF003793">
    <property type="entry name" value="PRK05382.1"/>
    <property type="match status" value="1"/>
</dbReference>
<dbReference type="PANTHER" id="PTHR21085">
    <property type="entry name" value="CHORISMATE SYNTHASE"/>
    <property type="match status" value="1"/>
</dbReference>
<dbReference type="PANTHER" id="PTHR21085:SF0">
    <property type="entry name" value="CHORISMATE SYNTHASE"/>
    <property type="match status" value="1"/>
</dbReference>
<dbReference type="Pfam" id="PF01264">
    <property type="entry name" value="Chorismate_synt"/>
    <property type="match status" value="1"/>
</dbReference>
<dbReference type="PIRSF" id="PIRSF001456">
    <property type="entry name" value="Chorismate_synth"/>
    <property type="match status" value="1"/>
</dbReference>
<dbReference type="SUPFAM" id="SSF103263">
    <property type="entry name" value="Chorismate synthase, AroC"/>
    <property type="match status" value="1"/>
</dbReference>
<dbReference type="PROSITE" id="PS00787">
    <property type="entry name" value="CHORISMATE_SYNTHASE_1"/>
    <property type="match status" value="1"/>
</dbReference>
<dbReference type="PROSITE" id="PS00788">
    <property type="entry name" value="CHORISMATE_SYNTHASE_2"/>
    <property type="match status" value="1"/>
</dbReference>
<dbReference type="PROSITE" id="PS00789">
    <property type="entry name" value="CHORISMATE_SYNTHASE_3"/>
    <property type="match status" value="1"/>
</dbReference>
<comment type="function">
    <text evidence="1">Catalyzes the anti-1,4-elimination of the C-3 phosphate and the C-6 proR hydrogen from 5-enolpyruvylshikimate-3-phosphate (EPSP) to yield chorismate, which is the branch point compound that serves as the starting substrate for the three terminal pathways of aromatic amino acid biosynthesis. This reaction introduces a second double bond into the aromatic ring system.</text>
</comment>
<comment type="catalytic activity">
    <reaction evidence="1">
        <text>5-O-(1-carboxyvinyl)-3-phosphoshikimate = chorismate + phosphate</text>
        <dbReference type="Rhea" id="RHEA:21020"/>
        <dbReference type="ChEBI" id="CHEBI:29748"/>
        <dbReference type="ChEBI" id="CHEBI:43474"/>
        <dbReference type="ChEBI" id="CHEBI:57701"/>
        <dbReference type="EC" id="4.2.3.5"/>
    </reaction>
</comment>
<comment type="cofactor">
    <cofactor evidence="1">
        <name>FMNH2</name>
        <dbReference type="ChEBI" id="CHEBI:57618"/>
    </cofactor>
    <text evidence="1">Reduced FMN (FMNH(2)).</text>
</comment>
<comment type="pathway">
    <text evidence="1">Metabolic intermediate biosynthesis; chorismate biosynthesis; chorismate from D-erythrose 4-phosphate and phosphoenolpyruvate: step 7/7.</text>
</comment>
<comment type="subunit">
    <text evidence="1">Homotetramer.</text>
</comment>
<comment type="similarity">
    <text evidence="1">Belongs to the chorismate synthase family.</text>
</comment>
<feature type="chain" id="PRO_1000115389" description="Chorismate synthase">
    <location>
        <begin position="1"/>
        <end position="379"/>
    </location>
</feature>
<feature type="binding site" evidence="1">
    <location>
        <position position="48"/>
    </location>
    <ligand>
        <name>NADP(+)</name>
        <dbReference type="ChEBI" id="CHEBI:58349"/>
    </ligand>
</feature>
<feature type="binding site" evidence="1">
    <location>
        <position position="54"/>
    </location>
    <ligand>
        <name>NADP(+)</name>
        <dbReference type="ChEBI" id="CHEBI:58349"/>
    </ligand>
</feature>
<feature type="binding site" evidence="1">
    <location>
        <begin position="125"/>
        <end position="127"/>
    </location>
    <ligand>
        <name>FMN</name>
        <dbReference type="ChEBI" id="CHEBI:58210"/>
    </ligand>
</feature>
<feature type="binding site" evidence="1">
    <location>
        <begin position="241"/>
        <end position="242"/>
    </location>
    <ligand>
        <name>FMN</name>
        <dbReference type="ChEBI" id="CHEBI:58210"/>
    </ligand>
</feature>
<feature type="binding site" evidence="1">
    <location>
        <position position="286"/>
    </location>
    <ligand>
        <name>FMN</name>
        <dbReference type="ChEBI" id="CHEBI:58210"/>
    </ligand>
</feature>
<feature type="binding site" evidence="1">
    <location>
        <begin position="301"/>
        <end position="305"/>
    </location>
    <ligand>
        <name>FMN</name>
        <dbReference type="ChEBI" id="CHEBI:58210"/>
    </ligand>
</feature>
<feature type="binding site" evidence="1">
    <location>
        <position position="327"/>
    </location>
    <ligand>
        <name>FMN</name>
        <dbReference type="ChEBI" id="CHEBI:58210"/>
    </ligand>
</feature>
<accession>B6IRC6</accession>
<gene>
    <name evidence="1" type="primary">aroC</name>
    <name type="ordered locus">RC1_0576</name>
</gene>
<keyword id="KW-0028">Amino-acid biosynthesis</keyword>
<keyword id="KW-0057">Aromatic amino acid biosynthesis</keyword>
<keyword id="KW-0274">FAD</keyword>
<keyword id="KW-0285">Flavoprotein</keyword>
<keyword id="KW-0288">FMN</keyword>
<keyword id="KW-0456">Lyase</keyword>
<keyword id="KW-0521">NADP</keyword>
<keyword id="KW-1185">Reference proteome</keyword>
<evidence type="ECO:0000255" key="1">
    <source>
        <dbReference type="HAMAP-Rule" id="MF_00300"/>
    </source>
</evidence>